<feature type="chain" id="PRO_1000188378" description="Nucleoid occlusion factor SlmA">
    <location>
        <begin position="1"/>
        <end position="198"/>
    </location>
</feature>
<feature type="domain" description="HTH tetR-type" evidence="1">
    <location>
        <begin position="10"/>
        <end position="70"/>
    </location>
</feature>
<feature type="DNA-binding region" description="H-T-H motif" evidence="1">
    <location>
        <begin position="33"/>
        <end position="52"/>
    </location>
</feature>
<feature type="coiled-coil region" evidence="1">
    <location>
        <begin position="117"/>
        <end position="144"/>
    </location>
</feature>
<reference key="1">
    <citation type="journal article" date="2009" name="J. Bacteriol.">
        <title>Complete genome sequence and comparative genome analysis of enteropathogenic Escherichia coli O127:H6 strain E2348/69.</title>
        <authorList>
            <person name="Iguchi A."/>
            <person name="Thomson N.R."/>
            <person name="Ogura Y."/>
            <person name="Saunders D."/>
            <person name="Ooka T."/>
            <person name="Henderson I.R."/>
            <person name="Harris D."/>
            <person name="Asadulghani M."/>
            <person name="Kurokawa K."/>
            <person name="Dean P."/>
            <person name="Kenny B."/>
            <person name="Quail M.A."/>
            <person name="Thurston S."/>
            <person name="Dougan G."/>
            <person name="Hayashi T."/>
            <person name="Parkhill J."/>
            <person name="Frankel G."/>
        </authorList>
    </citation>
    <scope>NUCLEOTIDE SEQUENCE [LARGE SCALE GENOMIC DNA]</scope>
    <source>
        <strain>E2348/69 / EPEC</strain>
    </source>
</reference>
<organism>
    <name type="scientific">Escherichia coli O127:H6 (strain E2348/69 / EPEC)</name>
    <dbReference type="NCBI Taxonomy" id="574521"/>
    <lineage>
        <taxon>Bacteria</taxon>
        <taxon>Pseudomonadati</taxon>
        <taxon>Pseudomonadota</taxon>
        <taxon>Gammaproteobacteria</taxon>
        <taxon>Enterobacterales</taxon>
        <taxon>Enterobacteriaceae</taxon>
        <taxon>Escherichia</taxon>
    </lineage>
</organism>
<comment type="function">
    <text evidence="1">Required for nucleoid occlusion (NO) phenomenon, which prevents Z-ring formation and cell division over the nucleoid. Acts as a DNA-associated cell division inhibitor that binds simultaneously chromosomal DNA and FtsZ, and disrupts the assembly of FtsZ polymers. SlmA-DNA-binding sequences (SBS) are dispersed on non-Ter regions of the chromosome, preventing FtsZ polymerization at these regions.</text>
</comment>
<comment type="subunit">
    <text evidence="1">Homodimer. Interacts with FtsZ.</text>
</comment>
<comment type="subcellular location">
    <subcellularLocation>
        <location evidence="1">Cytoplasm</location>
        <location evidence="1">Nucleoid</location>
    </subcellularLocation>
</comment>
<comment type="similarity">
    <text evidence="1">Belongs to the nucleoid occlusion factor SlmA family.</text>
</comment>
<dbReference type="EMBL" id="FM180568">
    <property type="protein sequence ID" value="CAS11437.1"/>
    <property type="molecule type" value="Genomic_DNA"/>
</dbReference>
<dbReference type="RefSeq" id="WP_000818603.1">
    <property type="nucleotide sequence ID" value="NC_011601.1"/>
</dbReference>
<dbReference type="SMR" id="B7UM47"/>
<dbReference type="GeneID" id="86944372"/>
<dbReference type="KEGG" id="ecg:E2348C_3889"/>
<dbReference type="HOGENOM" id="CLU_069356_5_0_6"/>
<dbReference type="Proteomes" id="UP000008205">
    <property type="component" value="Chromosome"/>
</dbReference>
<dbReference type="GO" id="GO:0043590">
    <property type="term" value="C:bacterial nucleoid"/>
    <property type="evidence" value="ECO:0007669"/>
    <property type="project" value="UniProtKB-UniRule"/>
</dbReference>
<dbReference type="GO" id="GO:0005737">
    <property type="term" value="C:cytoplasm"/>
    <property type="evidence" value="ECO:0007669"/>
    <property type="project" value="UniProtKB-UniRule"/>
</dbReference>
<dbReference type="GO" id="GO:0003700">
    <property type="term" value="F:DNA-binding transcription factor activity"/>
    <property type="evidence" value="ECO:0007669"/>
    <property type="project" value="TreeGrafter"/>
</dbReference>
<dbReference type="GO" id="GO:0000976">
    <property type="term" value="F:transcription cis-regulatory region binding"/>
    <property type="evidence" value="ECO:0007669"/>
    <property type="project" value="TreeGrafter"/>
</dbReference>
<dbReference type="GO" id="GO:0051301">
    <property type="term" value="P:cell division"/>
    <property type="evidence" value="ECO:0007669"/>
    <property type="project" value="UniProtKB-KW"/>
</dbReference>
<dbReference type="GO" id="GO:0010974">
    <property type="term" value="P:negative regulation of division septum assembly"/>
    <property type="evidence" value="ECO:0007669"/>
    <property type="project" value="InterPro"/>
</dbReference>
<dbReference type="FunFam" id="1.10.357.10:FF:000002">
    <property type="entry name" value="Nucleoid occlusion factor SlmA"/>
    <property type="match status" value="1"/>
</dbReference>
<dbReference type="Gene3D" id="1.10.357.10">
    <property type="entry name" value="Tetracycline Repressor, domain 2"/>
    <property type="match status" value="1"/>
</dbReference>
<dbReference type="HAMAP" id="MF_01839">
    <property type="entry name" value="NO_factor_SlmA"/>
    <property type="match status" value="1"/>
</dbReference>
<dbReference type="InterPro" id="IPR023772">
    <property type="entry name" value="DNA-bd_HTH_TetR-type_CS"/>
</dbReference>
<dbReference type="InterPro" id="IPR009057">
    <property type="entry name" value="Homeodomain-like_sf"/>
</dbReference>
<dbReference type="InterPro" id="IPR050109">
    <property type="entry name" value="HTH-type_TetR-like_transc_reg"/>
</dbReference>
<dbReference type="InterPro" id="IPR001647">
    <property type="entry name" value="HTH_TetR"/>
</dbReference>
<dbReference type="InterPro" id="IPR023769">
    <property type="entry name" value="NO_SlmA"/>
</dbReference>
<dbReference type="InterPro" id="IPR054580">
    <property type="entry name" value="SlmA-like_C"/>
</dbReference>
<dbReference type="InterPro" id="IPR036271">
    <property type="entry name" value="Tet_transcr_reg_TetR-rel_C_sf"/>
</dbReference>
<dbReference type="NCBIfam" id="NF007015">
    <property type="entry name" value="PRK09480.1"/>
    <property type="match status" value="1"/>
</dbReference>
<dbReference type="PANTHER" id="PTHR30055">
    <property type="entry name" value="HTH-TYPE TRANSCRIPTIONAL REGULATOR RUTR"/>
    <property type="match status" value="1"/>
</dbReference>
<dbReference type="PANTHER" id="PTHR30055:SF183">
    <property type="entry name" value="NUCLEOID OCCLUSION FACTOR SLMA"/>
    <property type="match status" value="1"/>
</dbReference>
<dbReference type="Pfam" id="PF22276">
    <property type="entry name" value="SlmA-like_C"/>
    <property type="match status" value="1"/>
</dbReference>
<dbReference type="Pfam" id="PF00440">
    <property type="entry name" value="TetR_N"/>
    <property type="match status" value="1"/>
</dbReference>
<dbReference type="SUPFAM" id="SSF46689">
    <property type="entry name" value="Homeodomain-like"/>
    <property type="match status" value="1"/>
</dbReference>
<dbReference type="SUPFAM" id="SSF48498">
    <property type="entry name" value="Tetracyclin repressor-like, C-terminal domain"/>
    <property type="match status" value="1"/>
</dbReference>
<dbReference type="PROSITE" id="PS01081">
    <property type="entry name" value="HTH_TETR_1"/>
    <property type="match status" value="1"/>
</dbReference>
<dbReference type="PROSITE" id="PS50977">
    <property type="entry name" value="HTH_TETR_2"/>
    <property type="match status" value="1"/>
</dbReference>
<keyword id="KW-0131">Cell cycle</keyword>
<keyword id="KW-0132">Cell division</keyword>
<keyword id="KW-0175">Coiled coil</keyword>
<keyword id="KW-0963">Cytoplasm</keyword>
<keyword id="KW-0238">DNA-binding</keyword>
<keyword id="KW-1185">Reference proteome</keyword>
<name>SLMA_ECO27</name>
<proteinExistence type="inferred from homology"/>
<protein>
    <recommendedName>
        <fullName evidence="1">Nucleoid occlusion factor SlmA</fullName>
    </recommendedName>
</protein>
<accession>B7UM47</accession>
<sequence>MAEKQTAKRNRREEILQSLALMLESSDGSQRITTAKLAASVGVSEAALYRHFPSKTRMFDSLIEFIEDSLITRINLILKDEKDTTARLRLIVLLLLGFGERNPGLTRILTGHALMFEQDRLQGRINQLFERIEAQLRQVLREKRMREGEGYTTDETLLASQLLAFCEGMLSRFVRSEFKYRPTDDFDARWPLIAAQLQ</sequence>
<gene>
    <name evidence="1" type="primary">slmA</name>
    <name type="ordered locus">E2348C_3889</name>
</gene>
<evidence type="ECO:0000255" key="1">
    <source>
        <dbReference type="HAMAP-Rule" id="MF_01839"/>
    </source>
</evidence>